<name>HBN1_YEAST</name>
<keyword id="KW-0007">Acetylation</keyword>
<keyword id="KW-0963">Cytoplasm</keyword>
<keyword id="KW-0285">Flavoprotein</keyword>
<keyword id="KW-0288">FMN</keyword>
<keyword id="KW-0539">Nucleus</keyword>
<keyword id="KW-0560">Oxidoreductase</keyword>
<keyword id="KW-1185">Reference proteome</keyword>
<protein>
    <recommendedName>
        <fullName>Putative nitroreductase HBN1</fullName>
        <ecNumber>1.-.-.-</ecNumber>
    </recommendedName>
    <alternativeName>
        <fullName>Homologous to bacterial nitroreductases protein 1</fullName>
    </alternativeName>
</protein>
<reference key="1">
    <citation type="journal article" date="1992" name="Nature">
        <title>The complete DNA sequence of yeast chromosome III.</title>
        <authorList>
            <person name="Oliver S.G."/>
            <person name="van der Aart Q.J.M."/>
            <person name="Agostoni-Carbone M.L."/>
            <person name="Aigle M."/>
            <person name="Alberghina L."/>
            <person name="Alexandraki D."/>
            <person name="Antoine G."/>
            <person name="Anwar R."/>
            <person name="Ballesta J.P.G."/>
            <person name="Benit P."/>
            <person name="Berben G."/>
            <person name="Bergantino E."/>
            <person name="Biteau N."/>
            <person name="Bolle P.-A."/>
            <person name="Bolotin-Fukuhara M."/>
            <person name="Brown A."/>
            <person name="Brown A.J.P."/>
            <person name="Buhler J.-M."/>
            <person name="Carcano C."/>
            <person name="Carignani G."/>
            <person name="Cederberg H."/>
            <person name="Chanet R."/>
            <person name="Contreras R."/>
            <person name="Crouzet M."/>
            <person name="Daignan-Fornier B."/>
            <person name="Defoor E."/>
            <person name="Delgado M.D."/>
            <person name="Demolder J."/>
            <person name="Doira C."/>
            <person name="Dubois E."/>
            <person name="Dujon B."/>
            <person name="Duesterhoeft A."/>
            <person name="Erdmann D."/>
            <person name="Esteban M."/>
            <person name="Fabre F."/>
            <person name="Fairhead C."/>
            <person name="Faye G."/>
            <person name="Feldmann H."/>
            <person name="Fiers W."/>
            <person name="Francingues-Gaillard M.-C."/>
            <person name="Franco L."/>
            <person name="Frontali L."/>
            <person name="Fukuhara H."/>
            <person name="Fuller L.J."/>
            <person name="Galland P."/>
            <person name="Gent M.E."/>
            <person name="Gigot D."/>
            <person name="Gilliquet V."/>
            <person name="Glansdorff N."/>
            <person name="Goffeau A."/>
            <person name="Grenson M."/>
            <person name="Grisanti P."/>
            <person name="Grivell L.A."/>
            <person name="de Haan M."/>
            <person name="Haasemann M."/>
            <person name="Hatat D."/>
            <person name="Hoenicka J."/>
            <person name="Hegemann J.H."/>
            <person name="Herbert C.J."/>
            <person name="Hilger F."/>
            <person name="Hohmann S."/>
            <person name="Hollenberg C.P."/>
            <person name="Huse K."/>
            <person name="Iborra F."/>
            <person name="Indge K.J."/>
            <person name="Isono K."/>
            <person name="Jacq C."/>
            <person name="Jacquet M."/>
            <person name="James C.M."/>
            <person name="Jauniaux J.-C."/>
            <person name="Jia Y."/>
            <person name="Jimenez A."/>
            <person name="Kelly A."/>
            <person name="Kleinhans U."/>
            <person name="Kreisl P."/>
            <person name="Lanfranchi G."/>
            <person name="Lewis C."/>
            <person name="van der Linden C.G."/>
            <person name="Lucchini G."/>
            <person name="Lutzenkirchen K."/>
            <person name="Maat M.J."/>
            <person name="Mallet L."/>
            <person name="Mannhaupt G."/>
            <person name="Martegani E."/>
            <person name="Mathieu A."/>
            <person name="Maurer C.T.C."/>
            <person name="McConnell D."/>
            <person name="McKee R.A."/>
            <person name="Messenguy F."/>
            <person name="Mewes H.-W."/>
            <person name="Molemans F."/>
            <person name="Montague M.A."/>
            <person name="Muzi Falconi M."/>
            <person name="Navas L."/>
            <person name="Newlon C.S."/>
            <person name="Noone D."/>
            <person name="Pallier C."/>
            <person name="Panzeri L."/>
            <person name="Pearson B.M."/>
            <person name="Perea J."/>
            <person name="Philippsen P."/>
            <person name="Pierard A."/>
            <person name="Planta R.J."/>
            <person name="Plevani P."/>
            <person name="Poetsch B."/>
            <person name="Pohl F.M."/>
            <person name="Purnelle B."/>
            <person name="Ramezani Rad M."/>
            <person name="Rasmussen S.W."/>
            <person name="Raynal A."/>
            <person name="Remacha M.A."/>
            <person name="Richterich P."/>
            <person name="Roberts A.B."/>
            <person name="Rodriguez F."/>
            <person name="Sanz E."/>
            <person name="Schaaff-Gerstenschlaeger I."/>
            <person name="Scherens B."/>
            <person name="Schweitzer B."/>
            <person name="Shu Y."/>
            <person name="Skala J."/>
            <person name="Slonimski P.P."/>
            <person name="Sor F."/>
            <person name="Soustelle C."/>
            <person name="Spiegelberg R."/>
            <person name="Stateva L.I."/>
            <person name="Steensma H.Y."/>
            <person name="Steiner S."/>
            <person name="Thierry A."/>
            <person name="Thireos G."/>
            <person name="Tzermia M."/>
            <person name="Urrestarazu L.A."/>
            <person name="Valle G."/>
            <person name="Vetter I."/>
            <person name="van Vliet-Reedijk J.C."/>
            <person name="Voet M."/>
            <person name="Volckaert G."/>
            <person name="Vreken P."/>
            <person name="Wang H."/>
            <person name="Warmington J.R."/>
            <person name="von Wettstein D."/>
            <person name="Wicksteed B.L."/>
            <person name="Wilson C."/>
            <person name="Wurst H."/>
            <person name="Xu G."/>
            <person name="Yoshikawa A."/>
            <person name="Zimmermann F.K."/>
            <person name="Sgouros J.G."/>
        </authorList>
    </citation>
    <scope>NUCLEOTIDE SEQUENCE [LARGE SCALE GENOMIC DNA]</scope>
    <source>
        <strain>ATCC 204508 / S288c</strain>
    </source>
</reference>
<reference key="2">
    <citation type="journal article" date="2014" name="G3 (Bethesda)">
        <title>The reference genome sequence of Saccharomyces cerevisiae: Then and now.</title>
        <authorList>
            <person name="Engel S.R."/>
            <person name="Dietrich F.S."/>
            <person name="Fisk D.G."/>
            <person name="Binkley G."/>
            <person name="Balakrishnan R."/>
            <person name="Costanzo M.C."/>
            <person name="Dwight S.S."/>
            <person name="Hitz B.C."/>
            <person name="Karra K."/>
            <person name="Nash R.S."/>
            <person name="Weng S."/>
            <person name="Wong E.D."/>
            <person name="Lloyd P."/>
            <person name="Skrzypek M.S."/>
            <person name="Miyasato S.R."/>
            <person name="Simison M."/>
            <person name="Cherry J.M."/>
        </authorList>
    </citation>
    <scope>GENOME REANNOTATION</scope>
    <source>
        <strain>ATCC 204508 / S288c</strain>
    </source>
</reference>
<reference key="3">
    <citation type="journal article" date="2003" name="Nature">
        <title>Global analysis of protein localization in budding yeast.</title>
        <authorList>
            <person name="Huh W.-K."/>
            <person name="Falvo J.V."/>
            <person name="Gerke L.C."/>
            <person name="Carroll A.S."/>
            <person name="Howson R.W."/>
            <person name="Weissman J.S."/>
            <person name="O'Shea E.K."/>
        </authorList>
    </citation>
    <scope>SUBCELLULAR LOCATION [LARGE SCALE ANALYSIS]</scope>
</reference>
<reference key="4">
    <citation type="journal article" date="2007" name="Biochem. Biophys. Res. Commun.">
        <title>In silico identification of a new group of specific bacterial and fungal nitroreductases-like proteins.</title>
        <authorList>
            <person name="de Oliveira I.M."/>
            <person name="Henriques J.A.P."/>
            <person name="Bonatto D."/>
        </authorList>
    </citation>
    <scope>IDENTIFICATION</scope>
    <scope>GENE NAME</scope>
</reference>
<reference key="5">
    <citation type="journal article" date="2012" name="Proc. Natl. Acad. Sci. U.S.A.">
        <title>N-terminal acetylome analyses and functional insights of the N-terminal acetyltransferase NatB.</title>
        <authorList>
            <person name="Van Damme P."/>
            <person name="Lasa M."/>
            <person name="Polevoda B."/>
            <person name="Gazquez C."/>
            <person name="Elosegui-Artola A."/>
            <person name="Kim D.S."/>
            <person name="De Juan-Pardo E."/>
            <person name="Demeyer K."/>
            <person name="Hole K."/>
            <person name="Larrea E."/>
            <person name="Timmerman E."/>
            <person name="Prieto J."/>
            <person name="Arnesen T."/>
            <person name="Sherman F."/>
            <person name="Gevaert K."/>
            <person name="Aldabe R."/>
        </authorList>
    </citation>
    <scope>ACETYLATION [LARGE SCALE ANALYSIS] AT SER-2</scope>
    <scope>CLEAVAGE OF INITIATOR METHIONINE [LARGE SCALE ANALYSIS]</scope>
    <scope>IDENTIFICATION BY MASS SPECTROMETRY [LARGE SCALE ANALYSIS]</scope>
</reference>
<dbReference type="EC" id="1.-.-.-"/>
<dbReference type="EMBL" id="X59720">
    <property type="protein sequence ID" value="CAC42959.1"/>
    <property type="molecule type" value="Genomic_DNA"/>
</dbReference>
<dbReference type="EMBL" id="BK006937">
    <property type="protein sequence ID" value="DAA07458.1"/>
    <property type="molecule type" value="Genomic_DNA"/>
</dbReference>
<dbReference type="RefSeq" id="NP_065436.1">
    <property type="nucleotide sequence ID" value="NM_001184449.1"/>
</dbReference>
<dbReference type="SMR" id="Q96VH4"/>
<dbReference type="BioGRID" id="30957">
    <property type="interactions" value="44"/>
</dbReference>
<dbReference type="FunCoup" id="Q96VH4">
    <property type="interactions" value="20"/>
</dbReference>
<dbReference type="IntAct" id="Q96VH4">
    <property type="interactions" value="1"/>
</dbReference>
<dbReference type="STRING" id="4932.YCL026C-B"/>
<dbReference type="iPTMnet" id="Q96VH4"/>
<dbReference type="PaxDb" id="4932-YCL026C-B"/>
<dbReference type="PeptideAtlas" id="Q96VH4"/>
<dbReference type="TopDownProteomics" id="Q96VH4"/>
<dbReference type="EnsemblFungi" id="YCL026C-B_mRNA">
    <property type="protein sequence ID" value="YCL026C-B"/>
    <property type="gene ID" value="YCL026C-B"/>
</dbReference>
<dbReference type="GeneID" id="850331"/>
<dbReference type="KEGG" id="sce:YCL026C-B"/>
<dbReference type="AGR" id="SGD:S000007548"/>
<dbReference type="SGD" id="S000007548">
    <property type="gene designation" value="HBN1"/>
</dbReference>
<dbReference type="VEuPathDB" id="FungiDB:YCL026C-B"/>
<dbReference type="eggNOG" id="ENOG502RYI9">
    <property type="taxonomic scope" value="Eukaryota"/>
</dbReference>
<dbReference type="HOGENOM" id="CLU_073125_1_0_1"/>
<dbReference type="InParanoid" id="Q96VH4"/>
<dbReference type="OMA" id="EMFENHT"/>
<dbReference type="OrthoDB" id="2138173at2759"/>
<dbReference type="BioCyc" id="YEAST:G3O-29420-MONOMER"/>
<dbReference type="BioGRID-ORCS" id="850331">
    <property type="hits" value="0 hits in 10 CRISPR screens"/>
</dbReference>
<dbReference type="PRO" id="PR:Q96VH4"/>
<dbReference type="Proteomes" id="UP000002311">
    <property type="component" value="Chromosome III"/>
</dbReference>
<dbReference type="RNAct" id="Q96VH4">
    <property type="molecule type" value="protein"/>
</dbReference>
<dbReference type="GO" id="GO:0005737">
    <property type="term" value="C:cytoplasm"/>
    <property type="evidence" value="ECO:0007005"/>
    <property type="project" value="SGD"/>
</dbReference>
<dbReference type="GO" id="GO:0005634">
    <property type="term" value="C:nucleus"/>
    <property type="evidence" value="ECO:0007005"/>
    <property type="project" value="SGD"/>
</dbReference>
<dbReference type="GO" id="GO:0016491">
    <property type="term" value="F:oxidoreductase activity"/>
    <property type="evidence" value="ECO:0007669"/>
    <property type="project" value="UniProtKB-KW"/>
</dbReference>
<dbReference type="GO" id="GO:0034599">
    <property type="term" value="P:cellular response to oxidative stress"/>
    <property type="evidence" value="ECO:0007669"/>
    <property type="project" value="InterPro"/>
</dbReference>
<dbReference type="CDD" id="cd02140">
    <property type="entry name" value="Frm2-like"/>
    <property type="match status" value="1"/>
</dbReference>
<dbReference type="FunFam" id="3.40.109.10:FF:000001">
    <property type="entry name" value="Nitroreductase family"/>
    <property type="match status" value="1"/>
</dbReference>
<dbReference type="Gene3D" id="3.40.109.10">
    <property type="entry name" value="NADH Oxidase"/>
    <property type="match status" value="1"/>
</dbReference>
<dbReference type="InterPro" id="IPR033877">
    <property type="entry name" value="Frm2/Hbn1"/>
</dbReference>
<dbReference type="InterPro" id="IPR029479">
    <property type="entry name" value="Nitroreductase"/>
</dbReference>
<dbReference type="InterPro" id="IPR000415">
    <property type="entry name" value="Nitroreductase-like"/>
</dbReference>
<dbReference type="PANTHER" id="PTHR43035">
    <property type="entry name" value="FATTY ACID REPRESSION MUTANT PROTEIN 2-RELATED"/>
    <property type="match status" value="1"/>
</dbReference>
<dbReference type="PANTHER" id="PTHR43035:SF1">
    <property type="entry name" value="FATTY ACID REPRESSION MUTANT PROTEIN 2-RELATED"/>
    <property type="match status" value="1"/>
</dbReference>
<dbReference type="Pfam" id="PF00881">
    <property type="entry name" value="Nitroreductase"/>
    <property type="match status" value="1"/>
</dbReference>
<dbReference type="SUPFAM" id="SSF55469">
    <property type="entry name" value="FMN-dependent nitroreductase-like"/>
    <property type="match status" value="1"/>
</dbReference>
<organism>
    <name type="scientific">Saccharomyces cerevisiae (strain ATCC 204508 / S288c)</name>
    <name type="common">Baker's yeast</name>
    <dbReference type="NCBI Taxonomy" id="559292"/>
    <lineage>
        <taxon>Eukaryota</taxon>
        <taxon>Fungi</taxon>
        <taxon>Dikarya</taxon>
        <taxon>Ascomycota</taxon>
        <taxon>Saccharomycotina</taxon>
        <taxon>Saccharomycetes</taxon>
        <taxon>Saccharomycetales</taxon>
        <taxon>Saccharomycetaceae</taxon>
        <taxon>Saccharomyces</taxon>
    </lineage>
</organism>
<feature type="initiator methionine" description="Removed" evidence="3">
    <location>
        <position position="1"/>
    </location>
</feature>
<feature type="chain" id="PRO_0000248448" description="Putative nitroreductase HBN1">
    <location>
        <begin position="2"/>
        <end position="193"/>
    </location>
</feature>
<feature type="modified residue" description="N-acetylserine" evidence="3">
    <location>
        <position position="2"/>
    </location>
</feature>
<sequence>MSAVATYLKTLTARRTIYALKPELPGEITINDIQSVVQTIIKETPTAFNSQPNRAVILTGETHKKVWDEVTKAIESPAGQKRPASARDEAFGSVIFFTDDKVTEKLKADFPAYAAAFPSFADHTSGAAQINSWVALEAMGLGGHLQHYNGYIKAALPSKIPESWTVQAQLVFGTPAAPPGEKTYIKNDVEIFN</sequence>
<accession>Q96VH4</accession>
<accession>D6VQY9</accession>
<proteinExistence type="evidence at protein level"/>
<gene>
    <name type="primary">HBN1</name>
    <name type="ordered locus">YCL026C-B</name>
    <name type="ORF">YCL027C-A</name>
</gene>
<comment type="cofactor">
    <cofactor evidence="2">
        <name>FMN</name>
        <dbReference type="ChEBI" id="CHEBI:58210"/>
    </cofactor>
</comment>
<comment type="subcellular location">
    <subcellularLocation>
        <location evidence="1">Cytoplasm</location>
    </subcellularLocation>
    <subcellularLocation>
        <location evidence="1">Nucleus</location>
    </subcellularLocation>
</comment>
<comment type="similarity">
    <text evidence="2">Belongs to the nitroreductase family.</text>
</comment>
<evidence type="ECO:0000269" key="1">
    <source>
    </source>
</evidence>
<evidence type="ECO:0000305" key="2"/>
<evidence type="ECO:0007744" key="3">
    <source>
    </source>
</evidence>